<reference key="1">
    <citation type="submission" date="2008-02" db="EMBL/GenBank/DDBJ databases">
        <title>Complete sequence of Haemophilus somnus 2336.</title>
        <authorList>
            <consortium name="US DOE Joint Genome Institute"/>
            <person name="Siddaramappa S."/>
            <person name="Duncan A.J."/>
            <person name="Challacombe J.F."/>
            <person name="Rainey D."/>
            <person name="Gillaspy A.F."/>
            <person name="Carson M."/>
            <person name="Gipson J."/>
            <person name="Gipson M."/>
            <person name="Bruce D."/>
            <person name="Detter J.C."/>
            <person name="Han C.S."/>
            <person name="Land M."/>
            <person name="Tapia R."/>
            <person name="Thompson L.S."/>
            <person name="Orvis J."/>
            <person name="Zaitshik J."/>
            <person name="Barnes G."/>
            <person name="Brettin T.S."/>
            <person name="Dyer D.W."/>
            <person name="Inzana T.J."/>
        </authorList>
    </citation>
    <scope>NUCLEOTIDE SEQUENCE [LARGE SCALE GENOMIC DNA]</scope>
    <source>
        <strain>2336</strain>
    </source>
</reference>
<proteinExistence type="inferred from homology"/>
<protein>
    <recommendedName>
        <fullName evidence="1">ATP-dependent protease subunit HslV</fullName>
        <ecNumber evidence="1">3.4.25.2</ecNumber>
    </recommendedName>
</protein>
<organism>
    <name type="scientific">Histophilus somni (strain 2336)</name>
    <name type="common">Haemophilus somnus</name>
    <dbReference type="NCBI Taxonomy" id="228400"/>
    <lineage>
        <taxon>Bacteria</taxon>
        <taxon>Pseudomonadati</taxon>
        <taxon>Pseudomonadota</taxon>
        <taxon>Gammaproteobacteria</taxon>
        <taxon>Pasteurellales</taxon>
        <taxon>Pasteurellaceae</taxon>
        <taxon>Histophilus</taxon>
    </lineage>
</organism>
<name>HSLV_HISS2</name>
<evidence type="ECO:0000255" key="1">
    <source>
        <dbReference type="HAMAP-Rule" id="MF_00248"/>
    </source>
</evidence>
<feature type="chain" id="PRO_1000078421" description="ATP-dependent protease subunit HslV">
    <location>
        <begin position="1"/>
        <end position="175"/>
    </location>
</feature>
<feature type="active site" evidence="1">
    <location>
        <position position="2"/>
    </location>
</feature>
<feature type="binding site" evidence="1">
    <location>
        <position position="158"/>
    </location>
    <ligand>
        <name>Na(+)</name>
        <dbReference type="ChEBI" id="CHEBI:29101"/>
    </ligand>
</feature>
<feature type="binding site" evidence="1">
    <location>
        <position position="161"/>
    </location>
    <ligand>
        <name>Na(+)</name>
        <dbReference type="ChEBI" id="CHEBI:29101"/>
    </ligand>
</feature>
<feature type="binding site" evidence="1">
    <location>
        <position position="164"/>
    </location>
    <ligand>
        <name>Na(+)</name>
        <dbReference type="ChEBI" id="CHEBI:29101"/>
    </ligand>
</feature>
<sequence>MTTIVSVRRKGQVVVGGDGQVSLGNTVMKGNARKVRRLYNGKVLTGFAGGTADAFTLFELFERKLEMHQGHLLKSAVELAKEWRTDRALRRLEAMLIVADKTESLIITGNGDVVQPEEDQILAIGSGGNYALSAARALVENTDLSAREIVEKSLKIAGDICVFTNLTHTIEELSE</sequence>
<gene>
    <name evidence="1" type="primary">hslV</name>
    <name type="ordered locus">HSM_0563</name>
</gene>
<dbReference type="EC" id="3.4.25.2" evidence="1"/>
<dbReference type="EMBL" id="CP000947">
    <property type="protein sequence ID" value="ACA32215.1"/>
    <property type="molecule type" value="Genomic_DNA"/>
</dbReference>
<dbReference type="RefSeq" id="WP_011609687.1">
    <property type="nucleotide sequence ID" value="NC_010519.1"/>
</dbReference>
<dbReference type="SMR" id="B0US06"/>
<dbReference type="STRING" id="228400.HSM_0563"/>
<dbReference type="MEROPS" id="T01.006"/>
<dbReference type="GeneID" id="31486845"/>
<dbReference type="KEGG" id="hsm:HSM_0563"/>
<dbReference type="HOGENOM" id="CLU_093872_1_0_6"/>
<dbReference type="GO" id="GO:0009376">
    <property type="term" value="C:HslUV protease complex"/>
    <property type="evidence" value="ECO:0007669"/>
    <property type="project" value="UniProtKB-UniRule"/>
</dbReference>
<dbReference type="GO" id="GO:0005839">
    <property type="term" value="C:proteasome core complex"/>
    <property type="evidence" value="ECO:0007669"/>
    <property type="project" value="InterPro"/>
</dbReference>
<dbReference type="GO" id="GO:0046872">
    <property type="term" value="F:metal ion binding"/>
    <property type="evidence" value="ECO:0007669"/>
    <property type="project" value="UniProtKB-KW"/>
</dbReference>
<dbReference type="GO" id="GO:0004298">
    <property type="term" value="F:threonine-type endopeptidase activity"/>
    <property type="evidence" value="ECO:0007669"/>
    <property type="project" value="UniProtKB-KW"/>
</dbReference>
<dbReference type="GO" id="GO:0051603">
    <property type="term" value="P:proteolysis involved in protein catabolic process"/>
    <property type="evidence" value="ECO:0007669"/>
    <property type="project" value="InterPro"/>
</dbReference>
<dbReference type="CDD" id="cd01913">
    <property type="entry name" value="protease_HslV"/>
    <property type="match status" value="1"/>
</dbReference>
<dbReference type="FunFam" id="3.60.20.10:FF:000002">
    <property type="entry name" value="ATP-dependent protease subunit HslV"/>
    <property type="match status" value="1"/>
</dbReference>
<dbReference type="Gene3D" id="3.60.20.10">
    <property type="entry name" value="Glutamine Phosphoribosylpyrophosphate, subunit 1, domain 1"/>
    <property type="match status" value="1"/>
</dbReference>
<dbReference type="HAMAP" id="MF_00248">
    <property type="entry name" value="HslV"/>
    <property type="match status" value="1"/>
</dbReference>
<dbReference type="InterPro" id="IPR022281">
    <property type="entry name" value="ATP-dep_Prtase_HsIV_su"/>
</dbReference>
<dbReference type="InterPro" id="IPR029055">
    <property type="entry name" value="Ntn_hydrolases_N"/>
</dbReference>
<dbReference type="InterPro" id="IPR001353">
    <property type="entry name" value="Proteasome_sua/b"/>
</dbReference>
<dbReference type="InterPro" id="IPR023333">
    <property type="entry name" value="Proteasome_suB-type"/>
</dbReference>
<dbReference type="NCBIfam" id="TIGR03692">
    <property type="entry name" value="ATP_dep_HslV"/>
    <property type="match status" value="1"/>
</dbReference>
<dbReference type="NCBIfam" id="NF003964">
    <property type="entry name" value="PRK05456.1"/>
    <property type="match status" value="1"/>
</dbReference>
<dbReference type="PANTHER" id="PTHR32194:SF0">
    <property type="entry name" value="ATP-DEPENDENT PROTEASE SUBUNIT HSLV"/>
    <property type="match status" value="1"/>
</dbReference>
<dbReference type="PANTHER" id="PTHR32194">
    <property type="entry name" value="METALLOPROTEASE TLDD"/>
    <property type="match status" value="1"/>
</dbReference>
<dbReference type="Pfam" id="PF00227">
    <property type="entry name" value="Proteasome"/>
    <property type="match status" value="1"/>
</dbReference>
<dbReference type="PIRSF" id="PIRSF039093">
    <property type="entry name" value="HslV"/>
    <property type="match status" value="1"/>
</dbReference>
<dbReference type="SUPFAM" id="SSF56235">
    <property type="entry name" value="N-terminal nucleophile aminohydrolases (Ntn hydrolases)"/>
    <property type="match status" value="1"/>
</dbReference>
<dbReference type="PROSITE" id="PS51476">
    <property type="entry name" value="PROTEASOME_BETA_2"/>
    <property type="match status" value="1"/>
</dbReference>
<comment type="function">
    <text evidence="1">Protease subunit of a proteasome-like degradation complex believed to be a general protein degrading machinery.</text>
</comment>
<comment type="catalytic activity">
    <reaction evidence="1">
        <text>ATP-dependent cleavage of peptide bonds with broad specificity.</text>
        <dbReference type="EC" id="3.4.25.2"/>
    </reaction>
</comment>
<comment type="activity regulation">
    <text evidence="1">Allosterically activated by HslU binding.</text>
</comment>
<comment type="subunit">
    <text evidence="1">A double ring-shaped homohexamer of HslV is capped on each side by a ring-shaped HslU homohexamer. The assembly of the HslU/HslV complex is dependent on binding of ATP.</text>
</comment>
<comment type="subcellular location">
    <subcellularLocation>
        <location evidence="1">Cytoplasm</location>
    </subcellularLocation>
</comment>
<comment type="similarity">
    <text evidence="1">Belongs to the peptidase T1B family. HslV subfamily.</text>
</comment>
<keyword id="KW-0021">Allosteric enzyme</keyword>
<keyword id="KW-0963">Cytoplasm</keyword>
<keyword id="KW-0378">Hydrolase</keyword>
<keyword id="KW-0479">Metal-binding</keyword>
<keyword id="KW-0645">Protease</keyword>
<keyword id="KW-0915">Sodium</keyword>
<keyword id="KW-0888">Threonine protease</keyword>
<accession>B0US06</accession>